<reference key="1">
    <citation type="journal article" date="2006" name="J. Bacteriol.">
        <title>Chromosome rearrangement and diversification of Francisella tularensis revealed by the type B (OSU18) genome sequence.</title>
        <authorList>
            <person name="Petrosino J.F."/>
            <person name="Xiang Q."/>
            <person name="Karpathy S.E."/>
            <person name="Jiang H."/>
            <person name="Yerrapragada S."/>
            <person name="Liu Y."/>
            <person name="Gioia J."/>
            <person name="Hemphill L."/>
            <person name="Gonzalez A."/>
            <person name="Raghavan T.M."/>
            <person name="Uzman A."/>
            <person name="Fox G.E."/>
            <person name="Highlander S."/>
            <person name="Reichard M."/>
            <person name="Morton R.J."/>
            <person name="Clinkenbeard K.D."/>
            <person name="Weinstock G.M."/>
        </authorList>
    </citation>
    <scope>NUCLEOTIDE SEQUENCE [LARGE SCALE GENOMIC DNA]</scope>
    <source>
        <strain>OSU18</strain>
    </source>
</reference>
<sequence>MLIYLFEWLSHYFKGLEVFSSYISVRIIMISITSLLITLALGRPMISWLQKMQIGQIVRDDGPQSHFSKRNTPTMGGVLILSSVIISCLLWGNLTSIYLWILILVVIFFGAIGFFDDYLKLVLKHPKGLRAKHKFALQSIFSIVLAIVLFYLLSKNGQMSLSIPFSKSLYIPMGIVIFVVLAFFIINGSSNAVNLTDGLDGLAIVPVVLVAAGLGIYAYIETNSTLANYLLFNYLGNPGLAEVAVFCAAVCGSGLAFLWFNSHPAEVFMGDVGSLTLGAVLGVIAVMVRQELIFFIMGLLFVVEALSVMLQVGSYKLRNGKRIFRMAPIHHHFELKGWPETKVVIRFWIISLILFLIGFAAIKVR</sequence>
<evidence type="ECO:0000255" key="1">
    <source>
        <dbReference type="HAMAP-Rule" id="MF_00038"/>
    </source>
</evidence>
<feature type="chain" id="PRO_1000002980" description="Phospho-N-acetylmuramoyl-pentapeptide-transferase">
    <location>
        <begin position="1"/>
        <end position="365"/>
    </location>
</feature>
<feature type="transmembrane region" description="Helical" evidence="1">
    <location>
        <begin position="22"/>
        <end position="42"/>
    </location>
</feature>
<feature type="transmembrane region" description="Helical" evidence="1">
    <location>
        <begin position="74"/>
        <end position="94"/>
    </location>
</feature>
<feature type="transmembrane region" description="Helical" evidence="1">
    <location>
        <begin position="95"/>
        <end position="115"/>
    </location>
</feature>
<feature type="transmembrane region" description="Helical" evidence="1">
    <location>
        <begin position="134"/>
        <end position="154"/>
    </location>
</feature>
<feature type="transmembrane region" description="Helical" evidence="1">
    <location>
        <begin position="168"/>
        <end position="188"/>
    </location>
</feature>
<feature type="transmembrane region" description="Helical" evidence="1">
    <location>
        <begin position="201"/>
        <end position="221"/>
    </location>
</feature>
<feature type="transmembrane region" description="Helical" evidence="1">
    <location>
        <begin position="240"/>
        <end position="260"/>
    </location>
</feature>
<feature type="transmembrane region" description="Helical" evidence="1">
    <location>
        <begin position="267"/>
        <end position="287"/>
    </location>
</feature>
<feature type="transmembrane region" description="Helical" evidence="1">
    <location>
        <begin position="292"/>
        <end position="312"/>
    </location>
</feature>
<feature type="transmembrane region" description="Helical" evidence="1">
    <location>
        <begin position="342"/>
        <end position="362"/>
    </location>
</feature>
<accession>Q0BKM7</accession>
<gene>
    <name evidence="1" type="primary">mraY</name>
    <name type="ordered locus">FTH_1562</name>
</gene>
<keyword id="KW-0131">Cell cycle</keyword>
<keyword id="KW-0132">Cell division</keyword>
<keyword id="KW-0997">Cell inner membrane</keyword>
<keyword id="KW-1003">Cell membrane</keyword>
<keyword id="KW-0133">Cell shape</keyword>
<keyword id="KW-0961">Cell wall biogenesis/degradation</keyword>
<keyword id="KW-0460">Magnesium</keyword>
<keyword id="KW-0472">Membrane</keyword>
<keyword id="KW-0479">Metal-binding</keyword>
<keyword id="KW-0573">Peptidoglycan synthesis</keyword>
<keyword id="KW-0808">Transferase</keyword>
<keyword id="KW-0812">Transmembrane</keyword>
<keyword id="KW-1133">Transmembrane helix</keyword>
<organism>
    <name type="scientific">Francisella tularensis subsp. holarctica (strain OSU18)</name>
    <dbReference type="NCBI Taxonomy" id="393011"/>
    <lineage>
        <taxon>Bacteria</taxon>
        <taxon>Pseudomonadati</taxon>
        <taxon>Pseudomonadota</taxon>
        <taxon>Gammaproteobacteria</taxon>
        <taxon>Thiotrichales</taxon>
        <taxon>Francisellaceae</taxon>
        <taxon>Francisella</taxon>
    </lineage>
</organism>
<dbReference type="EC" id="2.7.8.13" evidence="1"/>
<dbReference type="EMBL" id="CP000437">
    <property type="protein sequence ID" value="ABI83357.1"/>
    <property type="molecule type" value="Genomic_DNA"/>
</dbReference>
<dbReference type="RefSeq" id="WP_003017012.1">
    <property type="nucleotide sequence ID" value="NC_017463.1"/>
</dbReference>
<dbReference type="SMR" id="Q0BKM7"/>
<dbReference type="KEGG" id="fth:FTH_1562"/>
<dbReference type="UniPathway" id="UPA00219"/>
<dbReference type="GO" id="GO:0005886">
    <property type="term" value="C:plasma membrane"/>
    <property type="evidence" value="ECO:0007669"/>
    <property type="project" value="UniProtKB-SubCell"/>
</dbReference>
<dbReference type="GO" id="GO:0046872">
    <property type="term" value="F:metal ion binding"/>
    <property type="evidence" value="ECO:0007669"/>
    <property type="project" value="UniProtKB-KW"/>
</dbReference>
<dbReference type="GO" id="GO:0008963">
    <property type="term" value="F:phospho-N-acetylmuramoyl-pentapeptide-transferase activity"/>
    <property type="evidence" value="ECO:0007669"/>
    <property type="project" value="UniProtKB-UniRule"/>
</dbReference>
<dbReference type="GO" id="GO:0051992">
    <property type="term" value="F:UDP-N-acetylmuramoyl-L-alanyl-D-glutamyl-meso-2,6-diaminopimelyl-D-alanyl-D-alanine:undecaprenyl-phosphate transferase activity"/>
    <property type="evidence" value="ECO:0007669"/>
    <property type="project" value="RHEA"/>
</dbReference>
<dbReference type="GO" id="GO:0051301">
    <property type="term" value="P:cell division"/>
    <property type="evidence" value="ECO:0007669"/>
    <property type="project" value="UniProtKB-KW"/>
</dbReference>
<dbReference type="GO" id="GO:0071555">
    <property type="term" value="P:cell wall organization"/>
    <property type="evidence" value="ECO:0007669"/>
    <property type="project" value="UniProtKB-KW"/>
</dbReference>
<dbReference type="GO" id="GO:0009252">
    <property type="term" value="P:peptidoglycan biosynthetic process"/>
    <property type="evidence" value="ECO:0007669"/>
    <property type="project" value="UniProtKB-UniRule"/>
</dbReference>
<dbReference type="GO" id="GO:0008360">
    <property type="term" value="P:regulation of cell shape"/>
    <property type="evidence" value="ECO:0007669"/>
    <property type="project" value="UniProtKB-KW"/>
</dbReference>
<dbReference type="CDD" id="cd06852">
    <property type="entry name" value="GT_MraY"/>
    <property type="match status" value="1"/>
</dbReference>
<dbReference type="HAMAP" id="MF_00038">
    <property type="entry name" value="MraY"/>
    <property type="match status" value="1"/>
</dbReference>
<dbReference type="InterPro" id="IPR000715">
    <property type="entry name" value="Glycosyl_transferase_4"/>
</dbReference>
<dbReference type="InterPro" id="IPR003524">
    <property type="entry name" value="PNAcMuramoyl-5peptid_Trfase"/>
</dbReference>
<dbReference type="InterPro" id="IPR018480">
    <property type="entry name" value="PNAcMuramoyl-5peptid_Trfase_CS"/>
</dbReference>
<dbReference type="NCBIfam" id="TIGR00445">
    <property type="entry name" value="mraY"/>
    <property type="match status" value="1"/>
</dbReference>
<dbReference type="PANTHER" id="PTHR22926">
    <property type="entry name" value="PHOSPHO-N-ACETYLMURAMOYL-PENTAPEPTIDE-TRANSFERASE"/>
    <property type="match status" value="1"/>
</dbReference>
<dbReference type="PANTHER" id="PTHR22926:SF5">
    <property type="entry name" value="PHOSPHO-N-ACETYLMURAMOYL-PENTAPEPTIDE-TRANSFERASE HOMOLOG"/>
    <property type="match status" value="1"/>
</dbReference>
<dbReference type="Pfam" id="PF00953">
    <property type="entry name" value="Glycos_transf_4"/>
    <property type="match status" value="1"/>
</dbReference>
<dbReference type="Pfam" id="PF10555">
    <property type="entry name" value="MraY_sig1"/>
    <property type="match status" value="1"/>
</dbReference>
<dbReference type="PROSITE" id="PS01347">
    <property type="entry name" value="MRAY_1"/>
    <property type="match status" value="1"/>
</dbReference>
<dbReference type="PROSITE" id="PS01348">
    <property type="entry name" value="MRAY_2"/>
    <property type="match status" value="1"/>
</dbReference>
<name>MRAY_FRATO</name>
<comment type="function">
    <text evidence="1">Catalyzes the initial step of the lipid cycle reactions in the biosynthesis of the cell wall peptidoglycan: transfers peptidoglycan precursor phospho-MurNAc-pentapeptide from UDP-MurNAc-pentapeptide onto the lipid carrier undecaprenyl phosphate, yielding undecaprenyl-pyrophosphoryl-MurNAc-pentapeptide, known as lipid I.</text>
</comment>
<comment type="catalytic activity">
    <reaction evidence="1">
        <text>UDP-N-acetyl-alpha-D-muramoyl-L-alanyl-gamma-D-glutamyl-meso-2,6-diaminopimeloyl-D-alanyl-D-alanine + di-trans,octa-cis-undecaprenyl phosphate = di-trans,octa-cis-undecaprenyl diphospho-N-acetyl-alpha-D-muramoyl-L-alanyl-D-glutamyl-meso-2,6-diaminopimeloyl-D-alanyl-D-alanine + UMP</text>
        <dbReference type="Rhea" id="RHEA:28386"/>
        <dbReference type="ChEBI" id="CHEBI:57865"/>
        <dbReference type="ChEBI" id="CHEBI:60392"/>
        <dbReference type="ChEBI" id="CHEBI:61386"/>
        <dbReference type="ChEBI" id="CHEBI:61387"/>
        <dbReference type="EC" id="2.7.8.13"/>
    </reaction>
</comment>
<comment type="cofactor">
    <cofactor evidence="1">
        <name>Mg(2+)</name>
        <dbReference type="ChEBI" id="CHEBI:18420"/>
    </cofactor>
</comment>
<comment type="pathway">
    <text evidence="1">Cell wall biogenesis; peptidoglycan biosynthesis.</text>
</comment>
<comment type="subcellular location">
    <subcellularLocation>
        <location evidence="1">Cell inner membrane</location>
        <topology evidence="1">Multi-pass membrane protein</topology>
    </subcellularLocation>
</comment>
<comment type="similarity">
    <text evidence="1">Belongs to the glycosyltransferase 4 family. MraY subfamily.</text>
</comment>
<protein>
    <recommendedName>
        <fullName evidence="1">Phospho-N-acetylmuramoyl-pentapeptide-transferase</fullName>
        <ecNumber evidence="1">2.7.8.13</ecNumber>
    </recommendedName>
    <alternativeName>
        <fullName evidence="1">UDP-MurNAc-pentapeptide phosphotransferase</fullName>
    </alternativeName>
</protein>
<proteinExistence type="inferred from homology"/>